<organism>
    <name type="scientific">Mycoplasma pneumoniae (strain ATCC 29342 / M129 / Subtype 1)</name>
    <name type="common">Mycoplasmoides pneumoniae</name>
    <dbReference type="NCBI Taxonomy" id="272634"/>
    <lineage>
        <taxon>Bacteria</taxon>
        <taxon>Bacillati</taxon>
        <taxon>Mycoplasmatota</taxon>
        <taxon>Mycoplasmoidales</taxon>
        <taxon>Mycoplasmoidaceae</taxon>
        <taxon>Mycoplasmoides</taxon>
    </lineage>
</organism>
<reference key="1">
    <citation type="journal article" date="1996" name="Nucleic Acids Res.">
        <title>Complete sequence analysis of the genome of the bacterium Mycoplasma pneumoniae.</title>
        <authorList>
            <person name="Himmelreich R."/>
            <person name="Hilbert H."/>
            <person name="Plagens H."/>
            <person name="Pirkl E."/>
            <person name="Li B.-C."/>
            <person name="Herrmann R."/>
        </authorList>
    </citation>
    <scope>NUCLEOTIDE SEQUENCE [LARGE SCALE GENOMIC DNA]</scope>
    <source>
        <strain>ATCC 29342 / M129 / Subtype 1</strain>
    </source>
</reference>
<keyword id="KW-0963">Cytoplasm</keyword>
<keyword id="KW-0444">Lipid biosynthesis</keyword>
<keyword id="KW-0443">Lipid metabolism</keyword>
<keyword id="KW-0594">Phospholipid biosynthesis</keyword>
<keyword id="KW-1208">Phospholipid metabolism</keyword>
<keyword id="KW-1185">Reference proteome</keyword>
<keyword id="KW-0808">Transferase</keyword>
<proteinExistence type="inferred from homology"/>
<feature type="chain" id="PRO_0000189909" description="Phosphate acyltransferase">
    <location>
        <begin position="1"/>
        <end position="328"/>
    </location>
</feature>
<name>PLSX_MYCPN</name>
<dbReference type="EC" id="2.3.1.274" evidence="1"/>
<dbReference type="EMBL" id="U00089">
    <property type="protein sequence ID" value="AAB95944.1"/>
    <property type="molecule type" value="Genomic_DNA"/>
</dbReference>
<dbReference type="PIR" id="S73622">
    <property type="entry name" value="S73622"/>
</dbReference>
<dbReference type="RefSeq" id="NP_110235.1">
    <property type="nucleotide sequence ID" value="NC_000912.1"/>
</dbReference>
<dbReference type="RefSeq" id="WP_010874903.1">
    <property type="nucleotide sequence ID" value="NC_000912.1"/>
</dbReference>
<dbReference type="SMR" id="P75232"/>
<dbReference type="STRING" id="272634.MPN_546"/>
<dbReference type="EnsemblBacteria" id="AAB95944">
    <property type="protein sequence ID" value="AAB95944"/>
    <property type="gene ID" value="MPN_546"/>
</dbReference>
<dbReference type="KEGG" id="mpn:MPN_546"/>
<dbReference type="PATRIC" id="fig|272634.6.peg.608"/>
<dbReference type="HOGENOM" id="CLU_039379_1_1_14"/>
<dbReference type="OrthoDB" id="9806408at2"/>
<dbReference type="BioCyc" id="MPNE272634:G1GJ3-900-MONOMER"/>
<dbReference type="UniPathway" id="UPA00085"/>
<dbReference type="Proteomes" id="UP000000808">
    <property type="component" value="Chromosome"/>
</dbReference>
<dbReference type="GO" id="GO:0005737">
    <property type="term" value="C:cytoplasm"/>
    <property type="evidence" value="ECO:0007669"/>
    <property type="project" value="UniProtKB-SubCell"/>
</dbReference>
<dbReference type="GO" id="GO:0043811">
    <property type="term" value="F:phosphate:acyl-[acyl carrier protein] acyltransferase activity"/>
    <property type="evidence" value="ECO:0007669"/>
    <property type="project" value="UniProtKB-UniRule"/>
</dbReference>
<dbReference type="GO" id="GO:0006633">
    <property type="term" value="P:fatty acid biosynthetic process"/>
    <property type="evidence" value="ECO:0007669"/>
    <property type="project" value="UniProtKB-UniRule"/>
</dbReference>
<dbReference type="GO" id="GO:0008654">
    <property type="term" value="P:phospholipid biosynthetic process"/>
    <property type="evidence" value="ECO:0007669"/>
    <property type="project" value="UniProtKB-KW"/>
</dbReference>
<dbReference type="Gene3D" id="3.40.718.10">
    <property type="entry name" value="Isopropylmalate Dehydrogenase"/>
    <property type="match status" value="1"/>
</dbReference>
<dbReference type="HAMAP" id="MF_00019">
    <property type="entry name" value="PlsX"/>
    <property type="match status" value="1"/>
</dbReference>
<dbReference type="InterPro" id="IPR003664">
    <property type="entry name" value="FA_synthesis"/>
</dbReference>
<dbReference type="InterPro" id="IPR012281">
    <property type="entry name" value="Phospholipid_synth_PlsX-like"/>
</dbReference>
<dbReference type="NCBIfam" id="TIGR00182">
    <property type="entry name" value="plsX"/>
    <property type="match status" value="1"/>
</dbReference>
<dbReference type="PANTHER" id="PTHR30100">
    <property type="entry name" value="FATTY ACID/PHOSPHOLIPID SYNTHESIS PROTEIN PLSX"/>
    <property type="match status" value="1"/>
</dbReference>
<dbReference type="PANTHER" id="PTHR30100:SF1">
    <property type="entry name" value="PHOSPHATE ACYLTRANSFERASE"/>
    <property type="match status" value="1"/>
</dbReference>
<dbReference type="Pfam" id="PF02504">
    <property type="entry name" value="FA_synthesis"/>
    <property type="match status" value="1"/>
</dbReference>
<dbReference type="PIRSF" id="PIRSF002465">
    <property type="entry name" value="Phsphlp_syn_PlsX"/>
    <property type="match status" value="1"/>
</dbReference>
<dbReference type="SUPFAM" id="SSF53659">
    <property type="entry name" value="Isocitrate/Isopropylmalate dehydrogenase-like"/>
    <property type="match status" value="1"/>
</dbReference>
<evidence type="ECO:0000255" key="1">
    <source>
        <dbReference type="HAMAP-Rule" id="MF_00019"/>
    </source>
</evidence>
<accession>P75232</accession>
<sequence length="328" mass="36664">MAFRLAVDCLGFENHPREAIDAVLEYWSYHQELEFILVGDEKTFDGLDYLPKNITKQLASSCIDMTDTPLTARRKVNNSMQKAINLVRDGAADVVISAGSSAVYASLTYDGFGKIHKDVKSAFMSYVPTANNDWFYFLDVGANKNFTGKELYFLGLMADIFVKKTTNKISPRIALLNIGTEIHKGFDYHQEGYQLLNEDKHLNFTGFIEPRFLLDGVCDILVADGYSGNLVLKSMEGTFKTIARLLKQGYKRNPLAGLFSLGILKRIAKRFDYKNNAGAVVIGLNKLALKTHGSADKQQFLSTIRLAHTSLKSDLINAIKSSLDNYEK</sequence>
<comment type="function">
    <text evidence="1">Catalyzes the reversible formation of acyl-phosphate (acyl-PO(4)) from acyl-[acyl-carrier-protein] (acyl-ACP). This enzyme utilizes acyl-ACP as fatty acyl donor, but not acyl-CoA.</text>
</comment>
<comment type="catalytic activity">
    <reaction evidence="1">
        <text>a fatty acyl-[ACP] + phosphate = an acyl phosphate + holo-[ACP]</text>
        <dbReference type="Rhea" id="RHEA:42292"/>
        <dbReference type="Rhea" id="RHEA-COMP:9685"/>
        <dbReference type="Rhea" id="RHEA-COMP:14125"/>
        <dbReference type="ChEBI" id="CHEBI:43474"/>
        <dbReference type="ChEBI" id="CHEBI:59918"/>
        <dbReference type="ChEBI" id="CHEBI:64479"/>
        <dbReference type="ChEBI" id="CHEBI:138651"/>
        <dbReference type="EC" id="2.3.1.274"/>
    </reaction>
</comment>
<comment type="pathway">
    <text evidence="1">Lipid metabolism; phospholipid metabolism.</text>
</comment>
<comment type="subunit">
    <text evidence="1">Homodimer. Probably interacts with PlsY.</text>
</comment>
<comment type="subcellular location">
    <subcellularLocation>
        <location evidence="1">Cytoplasm</location>
    </subcellularLocation>
    <text evidence="1">Associated with the membrane possibly through PlsY.</text>
</comment>
<comment type="similarity">
    <text evidence="1">Belongs to the PlsX family.</text>
</comment>
<protein>
    <recommendedName>
        <fullName evidence="1">Phosphate acyltransferase</fullName>
        <ecNumber evidence="1">2.3.1.274</ecNumber>
    </recommendedName>
    <alternativeName>
        <fullName evidence="1">Acyl-ACP phosphotransacylase</fullName>
    </alternativeName>
    <alternativeName>
        <fullName evidence="1">Acyl-[acyl-carrier-protein]--phosphate acyltransferase</fullName>
    </alternativeName>
    <alternativeName>
        <fullName evidence="1">Phosphate-acyl-ACP acyltransferase</fullName>
    </alternativeName>
</protein>
<gene>
    <name evidence="1" type="primary">plsX</name>
    <name type="ordered locus">MPN_546</name>
    <name type="ORF">MP296</name>
</gene>